<feature type="chain" id="PRO_0000245240" description="Sodium-driven chloride bicarbonate exchanger">
    <location>
        <begin position="1"/>
        <end position="1118"/>
    </location>
</feature>
<feature type="topological domain" description="Cytoplasmic" evidence="3">
    <location>
        <begin position="1"/>
        <end position="509"/>
    </location>
</feature>
<feature type="transmembrane region" description="Helical" evidence="3">
    <location>
        <begin position="510"/>
        <end position="530"/>
    </location>
</feature>
<feature type="topological domain" description="Extracellular" evidence="3">
    <location>
        <begin position="531"/>
        <end position="538"/>
    </location>
</feature>
<feature type="transmembrane region" description="Helical" evidence="3">
    <location>
        <begin position="539"/>
        <end position="559"/>
    </location>
</feature>
<feature type="topological domain" description="Cytoplasmic" evidence="3">
    <location>
        <begin position="560"/>
        <end position="562"/>
    </location>
</feature>
<feature type="transmembrane region" description="Helical" evidence="3">
    <location>
        <begin position="563"/>
        <end position="583"/>
    </location>
</feature>
<feature type="topological domain" description="Extracellular" evidence="3">
    <location>
        <begin position="584"/>
        <end position="596"/>
    </location>
</feature>
<feature type="transmembrane region" description="Helical" evidence="3">
    <location>
        <begin position="597"/>
        <end position="617"/>
    </location>
</feature>
<feature type="topological domain" description="Cytoplasmic" evidence="3">
    <location>
        <begin position="618"/>
        <end position="626"/>
    </location>
</feature>
<feature type="transmembrane region" description="Helical" evidence="3">
    <location>
        <begin position="627"/>
        <end position="647"/>
    </location>
</feature>
<feature type="topological domain" description="Extracellular" evidence="3">
    <location>
        <begin position="648"/>
        <end position="720"/>
    </location>
</feature>
<feature type="transmembrane region" description="Helical" evidence="3">
    <location>
        <begin position="721"/>
        <end position="741"/>
    </location>
</feature>
<feature type="topological domain" description="Cytoplasmic" evidence="3">
    <location>
        <begin position="742"/>
        <end position="762"/>
    </location>
</feature>
<feature type="transmembrane region" description="Helical" evidence="3">
    <location>
        <begin position="763"/>
        <end position="783"/>
    </location>
</feature>
<feature type="topological domain" description="Extracellular" evidence="3">
    <location>
        <begin position="784"/>
        <end position="809"/>
    </location>
</feature>
<feature type="transmembrane region" description="Helical" evidence="3">
    <location>
        <begin position="810"/>
        <end position="830"/>
    </location>
</feature>
<feature type="topological domain" description="Cytoplasmic" evidence="3">
    <location>
        <begin position="831"/>
        <end position="855"/>
    </location>
</feature>
<feature type="transmembrane region" description="Helical" evidence="3">
    <location>
        <begin position="856"/>
        <end position="876"/>
    </location>
</feature>
<feature type="topological domain" description="Extracellular" evidence="3">
    <location>
        <begin position="877"/>
        <end position="912"/>
    </location>
</feature>
<feature type="transmembrane region" description="Helical" evidence="3">
    <location>
        <begin position="913"/>
        <end position="933"/>
    </location>
</feature>
<feature type="topological domain" description="Cytoplasmic" evidence="3">
    <location>
        <begin position="934"/>
        <end position="935"/>
    </location>
</feature>
<feature type="transmembrane region" description="Helical" evidence="3">
    <location>
        <begin position="936"/>
        <end position="956"/>
    </location>
</feature>
<feature type="topological domain" description="Extracellular" evidence="3">
    <location>
        <begin position="957"/>
        <end position="998"/>
    </location>
</feature>
<feature type="transmembrane region" description="Helical" evidence="3">
    <location>
        <begin position="999"/>
        <end position="1019"/>
    </location>
</feature>
<feature type="topological domain" description="Cytoplasmic" evidence="3">
    <location>
        <begin position="1020"/>
        <end position="1118"/>
    </location>
</feature>
<feature type="region of interest" description="Disordered" evidence="4">
    <location>
        <begin position="1"/>
        <end position="23"/>
    </location>
</feature>
<feature type="region of interest" description="Disordered" evidence="4">
    <location>
        <begin position="58"/>
        <end position="96"/>
    </location>
</feature>
<feature type="region of interest" description="Disordered" evidence="4">
    <location>
        <begin position="245"/>
        <end position="312"/>
    </location>
</feature>
<feature type="region of interest" description="Disordered" evidence="4">
    <location>
        <begin position="457"/>
        <end position="476"/>
    </location>
</feature>
<feature type="compositionally biased region" description="Basic residues" evidence="4">
    <location>
        <begin position="59"/>
        <end position="76"/>
    </location>
</feature>
<feature type="compositionally biased region" description="Basic and acidic residues" evidence="4">
    <location>
        <begin position="77"/>
        <end position="90"/>
    </location>
</feature>
<feature type="compositionally biased region" description="Polar residues" evidence="4">
    <location>
        <begin position="248"/>
        <end position="264"/>
    </location>
</feature>
<feature type="modified residue" description="Phosphoserine" evidence="1">
    <location>
        <position position="89"/>
    </location>
</feature>
<feature type="modified residue" description="Phosphothreonine" evidence="1">
    <location>
        <position position="94"/>
    </location>
</feature>
<feature type="modified residue" description="Phosphoserine" evidence="1">
    <location>
        <position position="276"/>
    </location>
</feature>
<feature type="modified residue" description="Phosphoserine" evidence="1">
    <location>
        <position position="1057"/>
    </location>
</feature>
<feature type="modified residue" description="Phosphoserine" evidence="1">
    <location>
        <position position="1085"/>
    </location>
</feature>
<feature type="glycosylation site" description="N-linked (GlcNAc...) asparagine" evidence="3">
    <location>
        <position position="674"/>
    </location>
</feature>
<feature type="glycosylation site" description="N-linked (GlcNAc...) asparagine" evidence="5">
    <location>
        <position position="677"/>
    </location>
</feature>
<feature type="glycosylation site" description="N-linked (GlcNAc...) asparagine" evidence="5">
    <location>
        <position position="687"/>
    </location>
</feature>
<feature type="glycosylation site" description="N-linked (GlcNAc...) asparagine" evidence="5">
    <location>
        <position position="697"/>
    </location>
</feature>
<feature type="splice variant" id="VSP_044993" description="In isoform 3." evidence="10">
    <original>MEIKDQGAQMEPLLPT</original>
    <variation>MQSLGVSGNRKVMQSGTCEPFQSLSHQ</variation>
    <location>
        <begin position="1"/>
        <end position="16"/>
    </location>
</feature>
<feature type="splice variant" id="VSP_019653" description="In isoform 2 and isoform 3." evidence="9 10 11">
    <location>
        <begin position="287"/>
        <end position="316"/>
    </location>
</feature>
<feature type="splice variant" id="VSP_054471" description="In isoform 4." evidence="10">
    <original>FLFILLGPLGKGQQYHEIGRSIATLMTDEVFHDVAYKAK</original>
    <variation>YFMMLPIKLKIVMTWYQELMSFWIRLLFSLLENGIQAFE</variation>
    <location>
        <begin position="370"/>
        <end position="408"/>
    </location>
</feature>
<feature type="splice variant" id="VSP_054472" description="In isoform 4." evidence="10">
    <location>
        <begin position="409"/>
        <end position="1118"/>
    </location>
</feature>
<feature type="sequence variant" id="VAR_089397" description="In NEDHBA; likely pathogenic; affects function in cellular pH regulation; no effect on localization to cell membrane." evidence="8">
    <original>H</original>
    <variation>Y</variation>
    <location>
        <position position="223"/>
    </location>
</feature>
<feature type="sequence variant" id="VAR_089398" description="In NEDHBA; uncertain significance." evidence="8">
    <original>R</original>
    <variation>T</variation>
    <location>
        <position position="351"/>
    </location>
</feature>
<feature type="sequence variant" id="VAR_089399" description="In NEDHBA; uncertain significance; dbSNP:rs751709773." evidence="8">
    <original>R</original>
    <variation>C</variation>
    <location>
        <position position="538"/>
    </location>
</feature>
<feature type="sequence variant" id="VAR_089400" description="In NEDHBA; uncertain significance; associated in cis with I-1103; reduced localization to cell membrane and impaired cellular pH regulation when associated in cis with I-1103." evidence="7">
    <original>K</original>
    <variation>M</variation>
    <location>
        <position position="577"/>
    </location>
</feature>
<feature type="sequence variant" id="VAR_089401" description="In NEDHBA; likely pathogenic; affects function in cellular pH regulation; retained intracellularly with loss of localization to cell membrane; dbSNP:rs370148354." evidence="8">
    <original>R</original>
    <variation>W</variation>
    <location>
        <position position="622"/>
    </location>
</feature>
<feature type="sequence variant" id="VAR_089402" description="In NEDHBA; uncertain significance; dbSNP:rs369971543." evidence="8">
    <original>L</original>
    <variation>F</variation>
    <location>
        <position position="706"/>
    </location>
</feature>
<feature type="sequence variant" id="VAR_089403" description="In NEDHBA; likely pathogenic; affects function in cellular pH regulation; no effect on localization to cell membrane; dbSNP:rs1694065388." evidence="8">
    <original>Y</original>
    <variation>C</variation>
    <location>
        <position position="721"/>
    </location>
</feature>
<feature type="sequence variant" id="VAR_089404" description="In NEDHBA; likely pathogenic." evidence="7">
    <location>
        <begin position="757"/>
        <end position="1118"/>
    </location>
</feature>
<feature type="sequence variant" id="VAR_089405" description="In NEDHBA; likely pathogenic; affects function in cellular pH regulation; retained intracellularly with loss of localization to cell membrane." evidence="7 8">
    <location>
        <begin position="873"/>
        <end position="1118"/>
    </location>
</feature>
<feature type="sequence variant" id="VAR_089406" description="In NEDHBA; likely pathogenic; affects function in cellular pH regulation; retained intracellularly with loss of localization to cell membrane." evidence="8">
    <original>P</original>
    <variation>L</variation>
    <location>
        <position position="965"/>
    </location>
</feature>
<feature type="sequence variant" id="VAR_089407" description="In NEDHBA; uncertain significance; associated in cis with M-577; reduced localization to cell membrane and impaired cellular pH regulation when associated in cis with M-577." evidence="7">
    <original>N</original>
    <variation>I</variation>
    <location>
        <position position="1103"/>
    </location>
</feature>
<feature type="mutagenesis site" description="Reduced glycosylation. Abolishes glycosylation; when associated with Q-687 and Q-697." evidence="5">
    <original>N</original>
    <variation>Q</variation>
    <location>
        <position position="677"/>
    </location>
</feature>
<feature type="mutagenesis site" description="Reduced glycosylation. Abolishes glycosylation; when associated with Q-677 and Q-697." evidence="5">
    <original>N</original>
    <variation>Q</variation>
    <location>
        <position position="687"/>
    </location>
</feature>
<feature type="mutagenesis site" description="Reduced glycosylation. Abolishes glycosylation; when associated with Q-677 and Q-687." evidence="5">
    <original>N</original>
    <variation>Q</variation>
    <location>
        <position position="697"/>
    </location>
</feature>
<feature type="sequence conflict" description="In Ref. 1; BAB18301." evidence="13" ref="1">
    <original>V</original>
    <variation>L</variation>
    <location>
        <position position="336"/>
    </location>
</feature>
<feature type="sequence conflict" description="In Ref. 3; BAH11596." evidence="13" ref="3">
    <original>T</original>
    <variation>I</variation>
    <location>
        <position position="699"/>
    </location>
</feature>
<feature type="sequence conflict" description="In Ref. 3; BAH11596." evidence="13" ref="3">
    <original>V</original>
    <variation>A</variation>
    <location>
        <position position="1008"/>
    </location>
</feature>
<feature type="sequence conflict" description="In Ref. 1; BAB18301." evidence="13" ref="1">
    <original>F</original>
    <variation>S</variation>
    <location>
        <position position="1009"/>
    </location>
</feature>
<feature type="sequence conflict" description="In Ref. 1; BAB18301." evidence="13" ref="1">
    <original>A</original>
    <variation>S</variation>
    <location>
        <position position="1015"/>
    </location>
</feature>
<feature type="sequence conflict" description="In Ref. 1; BAB18301." evidence="13" ref="1">
    <original>S</original>
    <variation>C</variation>
    <location>
        <position position="1033"/>
    </location>
</feature>
<feature type="sequence conflict" description="In Ref. 3; BAH11596." evidence="13" ref="3">
    <original>E</original>
    <variation>G</variation>
    <location>
        <position position="1048"/>
    </location>
</feature>
<feature type="sequence conflict" description="In Ref. 1; BAB18301." evidence="13" ref="1">
    <original>D</original>
    <variation>Y</variation>
    <location>
        <position position="1049"/>
    </location>
</feature>
<feature type="sequence conflict" description="In Ref. 1; BAB18301." evidence="13" ref="1">
    <original>SM</original>
    <variation>CV</variation>
    <location>
        <begin position="1057"/>
        <end position="1058"/>
    </location>
</feature>
<feature type="sequence conflict" description="In Ref. 1; BAB18301." evidence="13" ref="1">
    <original>A</original>
    <variation>P</variation>
    <location>
        <position position="1060"/>
    </location>
</feature>
<gene>
    <name evidence="14" type="primary">SLC4A10</name>
    <name evidence="12" type="synonym">NBCN2</name>
    <name evidence="9" type="synonym">NCBE</name>
</gene>
<accession>Q6U841</accession>
<accession>B7Z1R0</accession>
<accession>B7Z2J0</accession>
<accession>B7ZLC5</accession>
<accession>B9EG69</accession>
<accession>F8W675</accession>
<accession>Q4ZFX6</accession>
<accession>Q8TCP2</accession>
<accession>Q9HCQ6</accession>
<name>S4A10_HUMAN</name>
<dbReference type="EMBL" id="AB040457">
    <property type="protein sequence ID" value="BAB18301.1"/>
    <property type="molecule type" value="mRNA"/>
</dbReference>
<dbReference type="EMBL" id="AY376402">
    <property type="protein sequence ID" value="AAQ83632.1"/>
    <property type="molecule type" value="mRNA"/>
</dbReference>
<dbReference type="EMBL" id="AK293793">
    <property type="protein sequence ID" value="BAH11596.1"/>
    <property type="molecule type" value="mRNA"/>
</dbReference>
<dbReference type="EMBL" id="AK294767">
    <property type="protein sequence ID" value="BAH11876.1"/>
    <property type="molecule type" value="mRNA"/>
</dbReference>
<dbReference type="EMBL" id="AC008063">
    <property type="status" value="NOT_ANNOTATED_CDS"/>
    <property type="molecule type" value="Genomic_DNA"/>
</dbReference>
<dbReference type="EMBL" id="AC062022">
    <property type="status" value="NOT_ANNOTATED_CDS"/>
    <property type="molecule type" value="Genomic_DNA"/>
</dbReference>
<dbReference type="EMBL" id="AC092841">
    <property type="status" value="NOT_ANNOTATED_CDS"/>
    <property type="molecule type" value="Genomic_DNA"/>
</dbReference>
<dbReference type="EMBL" id="AC009487">
    <property type="status" value="NOT_ANNOTATED_CDS"/>
    <property type="molecule type" value="Genomic_DNA"/>
</dbReference>
<dbReference type="EMBL" id="AC092654">
    <property type="status" value="NOT_ANNOTATED_CDS"/>
    <property type="molecule type" value="Genomic_DNA"/>
</dbReference>
<dbReference type="EMBL" id="AC096654">
    <property type="protein sequence ID" value="AAX88962.1"/>
    <property type="molecule type" value="Genomic_DNA"/>
</dbReference>
<dbReference type="EMBL" id="CH471058">
    <property type="protein sequence ID" value="EAX11364.1"/>
    <property type="molecule type" value="Genomic_DNA"/>
</dbReference>
<dbReference type="EMBL" id="BC136269">
    <property type="protein sequence ID" value="AAI36270.1"/>
    <property type="molecule type" value="mRNA"/>
</dbReference>
<dbReference type="EMBL" id="BC143714">
    <property type="protein sequence ID" value="AAI43715.1"/>
    <property type="molecule type" value="mRNA"/>
</dbReference>
<dbReference type="EMBL" id="AL713680">
    <property type="protein sequence ID" value="CAD28484.1"/>
    <property type="molecule type" value="mRNA"/>
</dbReference>
<dbReference type="EMBL" id="AL832525">
    <property type="protein sequence ID" value="CAD38630.1"/>
    <property type="molecule type" value="mRNA"/>
</dbReference>
<dbReference type="CCDS" id="CCDS46438.1">
    <molecule id="Q6U841-2"/>
</dbReference>
<dbReference type="CCDS" id="CCDS54411.1">
    <molecule id="Q6U841-1"/>
</dbReference>
<dbReference type="CCDS" id="CCDS54412.1">
    <molecule id="Q6U841-3"/>
</dbReference>
<dbReference type="RefSeq" id="NP_001171486.1">
    <molecule id="Q6U841-1"/>
    <property type="nucleotide sequence ID" value="NM_001178015.2"/>
</dbReference>
<dbReference type="RefSeq" id="NP_001171487.1">
    <molecule id="Q6U841-3"/>
    <property type="nucleotide sequence ID" value="NM_001178016.2"/>
</dbReference>
<dbReference type="RefSeq" id="NP_071341.2">
    <molecule id="Q6U841-2"/>
    <property type="nucleotide sequence ID" value="NM_022058.4"/>
</dbReference>
<dbReference type="SMR" id="Q6U841"/>
<dbReference type="BioGRID" id="121475">
    <property type="interactions" value="6"/>
</dbReference>
<dbReference type="FunCoup" id="Q6U841">
    <property type="interactions" value="838"/>
</dbReference>
<dbReference type="IntAct" id="Q6U841">
    <property type="interactions" value="7"/>
</dbReference>
<dbReference type="STRING" id="9606.ENSP00000393066"/>
<dbReference type="DrugBank" id="DB01390">
    <property type="generic name" value="Sodium bicarbonate"/>
</dbReference>
<dbReference type="TCDB" id="2.A.31.2.14">
    <property type="family name" value="the anion exchanger (ae) family"/>
</dbReference>
<dbReference type="GlyCosmos" id="Q6U841">
    <property type="glycosylation" value="4 sites, No reported glycans"/>
</dbReference>
<dbReference type="GlyGen" id="Q6U841">
    <property type="glycosylation" value="5 sites, 2 N-linked glycans (2 sites), 1 O-linked glycan (1 site)"/>
</dbReference>
<dbReference type="iPTMnet" id="Q6U841"/>
<dbReference type="PhosphoSitePlus" id="Q6U841"/>
<dbReference type="SwissPalm" id="Q6U841"/>
<dbReference type="BioMuta" id="SLC4A10"/>
<dbReference type="DMDM" id="74710237"/>
<dbReference type="jPOST" id="Q6U841"/>
<dbReference type="MassIVE" id="Q6U841"/>
<dbReference type="PaxDb" id="9606-ENSP00000393066"/>
<dbReference type="PeptideAtlas" id="Q6U841"/>
<dbReference type="ProteomicsDB" id="29736"/>
<dbReference type="ProteomicsDB" id="6443"/>
<dbReference type="ProteomicsDB" id="67398">
    <molecule id="Q6U841-1"/>
</dbReference>
<dbReference type="ProteomicsDB" id="67399">
    <molecule id="Q6U841-2"/>
</dbReference>
<dbReference type="Antibodypedia" id="48063">
    <property type="antibodies" value="30 antibodies from 14 providers"/>
</dbReference>
<dbReference type="DNASU" id="57282"/>
<dbReference type="Ensembl" id="ENST00000375514.9">
    <molecule id="Q6U841-3"/>
    <property type="protein sequence ID" value="ENSP00000364664.5"/>
    <property type="gene ID" value="ENSG00000144290.17"/>
</dbReference>
<dbReference type="Ensembl" id="ENST00000415876.6">
    <molecule id="Q6U841-2"/>
    <property type="protein sequence ID" value="ENSP00000395797.2"/>
    <property type="gene ID" value="ENSG00000144290.17"/>
</dbReference>
<dbReference type="Ensembl" id="ENST00000446997.6">
    <molecule id="Q6U841-1"/>
    <property type="protein sequence ID" value="ENSP00000393066.1"/>
    <property type="gene ID" value="ENSG00000144290.17"/>
</dbReference>
<dbReference type="GeneID" id="57282"/>
<dbReference type="KEGG" id="hsa:57282"/>
<dbReference type="MANE-Select" id="ENST00000446997.6">
    <property type="protein sequence ID" value="ENSP00000393066.1"/>
    <property type="RefSeq nucleotide sequence ID" value="NM_001178015.2"/>
    <property type="RefSeq protein sequence ID" value="NP_001171486.1"/>
</dbReference>
<dbReference type="UCSC" id="uc002ubx.5">
    <molecule id="Q6U841-1"/>
    <property type="organism name" value="human"/>
</dbReference>
<dbReference type="AGR" id="HGNC:13811"/>
<dbReference type="CTD" id="57282"/>
<dbReference type="DisGeNET" id="57282"/>
<dbReference type="GeneCards" id="SLC4A10"/>
<dbReference type="HGNC" id="HGNC:13811">
    <property type="gene designation" value="SLC4A10"/>
</dbReference>
<dbReference type="HPA" id="ENSG00000144290">
    <property type="expression patterns" value="Group enriched (brain, choroid plexus, retina)"/>
</dbReference>
<dbReference type="MalaCards" id="SLC4A10"/>
<dbReference type="MIM" id="605556">
    <property type="type" value="gene"/>
</dbReference>
<dbReference type="MIM" id="620746">
    <property type="type" value="phenotype"/>
</dbReference>
<dbReference type="neXtProt" id="NX_Q6U841"/>
<dbReference type="OpenTargets" id="ENSG00000144290"/>
<dbReference type="Orphanet" id="664430">
    <property type="disease" value="Neurodevelopmental disorder-slit-like lateral ventricles-intellectual disability syndrome"/>
</dbReference>
<dbReference type="PharmGKB" id="PA37810"/>
<dbReference type="VEuPathDB" id="HostDB:ENSG00000144290"/>
<dbReference type="eggNOG" id="KOG1172">
    <property type="taxonomic scope" value="Eukaryota"/>
</dbReference>
<dbReference type="GeneTree" id="ENSGT00940000156972"/>
<dbReference type="InParanoid" id="Q6U841"/>
<dbReference type="OMA" id="EDAEKEX"/>
<dbReference type="OrthoDB" id="1735926at2759"/>
<dbReference type="PAN-GO" id="Q6U841">
    <property type="GO annotations" value="6 GO annotations based on evolutionary models"/>
</dbReference>
<dbReference type="PhylomeDB" id="Q6U841"/>
<dbReference type="TreeFam" id="TF313630"/>
<dbReference type="PathwayCommons" id="Q6U841"/>
<dbReference type="Reactome" id="R-HSA-425381">
    <property type="pathway name" value="Bicarbonate transporters"/>
</dbReference>
<dbReference type="SignaLink" id="Q6U841"/>
<dbReference type="SIGNOR" id="Q6U841"/>
<dbReference type="BioGRID-ORCS" id="57282">
    <property type="hits" value="5 hits in 1149 CRISPR screens"/>
</dbReference>
<dbReference type="ChiTaRS" id="SLC4A10">
    <property type="organism name" value="human"/>
</dbReference>
<dbReference type="GenomeRNAi" id="57282"/>
<dbReference type="Pharos" id="Q6U841">
    <property type="development level" value="Tbio"/>
</dbReference>
<dbReference type="PRO" id="PR:Q6U841"/>
<dbReference type="Proteomes" id="UP000005640">
    <property type="component" value="Chromosome 2"/>
</dbReference>
<dbReference type="RNAct" id="Q6U841">
    <property type="molecule type" value="protein"/>
</dbReference>
<dbReference type="Bgee" id="ENSG00000144290">
    <property type="expression patterns" value="Expressed in superior frontal gyrus and 85 other cell types or tissues"/>
</dbReference>
<dbReference type="ExpressionAtlas" id="Q6U841">
    <property type="expression patterns" value="baseline and differential"/>
</dbReference>
<dbReference type="GO" id="GO:0097440">
    <property type="term" value="C:apical dendrite"/>
    <property type="evidence" value="ECO:0007669"/>
    <property type="project" value="Ensembl"/>
</dbReference>
<dbReference type="GO" id="GO:0016324">
    <property type="term" value="C:apical plasma membrane"/>
    <property type="evidence" value="ECO:0000250"/>
    <property type="project" value="UniProtKB"/>
</dbReference>
<dbReference type="GO" id="GO:0043679">
    <property type="term" value="C:axon terminus"/>
    <property type="evidence" value="ECO:0000250"/>
    <property type="project" value="UniProtKB"/>
</dbReference>
<dbReference type="GO" id="GO:0097441">
    <property type="term" value="C:basal dendrite"/>
    <property type="evidence" value="ECO:0007669"/>
    <property type="project" value="Ensembl"/>
</dbReference>
<dbReference type="GO" id="GO:0016323">
    <property type="term" value="C:basolateral plasma membrane"/>
    <property type="evidence" value="ECO:0000250"/>
    <property type="project" value="UniProtKB"/>
</dbReference>
<dbReference type="GO" id="GO:0097442">
    <property type="term" value="C:CA3 pyramidal cell dendrite"/>
    <property type="evidence" value="ECO:0007669"/>
    <property type="project" value="Ensembl"/>
</dbReference>
<dbReference type="GO" id="GO:0030425">
    <property type="term" value="C:dendrite"/>
    <property type="evidence" value="ECO:0000250"/>
    <property type="project" value="UniProtKB"/>
</dbReference>
<dbReference type="GO" id="GO:0098982">
    <property type="term" value="C:GABA-ergic synapse"/>
    <property type="evidence" value="ECO:0000250"/>
    <property type="project" value="UniProtKB"/>
</dbReference>
<dbReference type="GO" id="GO:0016020">
    <property type="term" value="C:membrane"/>
    <property type="evidence" value="ECO:0000303"/>
    <property type="project" value="UniProtKB"/>
</dbReference>
<dbReference type="GO" id="GO:0043025">
    <property type="term" value="C:neuronal cell body"/>
    <property type="evidence" value="ECO:0000250"/>
    <property type="project" value="UniProtKB"/>
</dbReference>
<dbReference type="GO" id="GO:0043204">
    <property type="term" value="C:perikaryon"/>
    <property type="evidence" value="ECO:0007669"/>
    <property type="project" value="UniProtKB-SubCell"/>
</dbReference>
<dbReference type="GO" id="GO:0005886">
    <property type="term" value="C:plasma membrane"/>
    <property type="evidence" value="ECO:0000318"/>
    <property type="project" value="GO_Central"/>
</dbReference>
<dbReference type="GO" id="GO:0098794">
    <property type="term" value="C:postsynapse"/>
    <property type="evidence" value="ECO:0007669"/>
    <property type="project" value="UniProtKB-SubCell"/>
</dbReference>
<dbReference type="GO" id="GO:0036477">
    <property type="term" value="C:somatodendritic compartment"/>
    <property type="evidence" value="ECO:0000250"/>
    <property type="project" value="UniProtKB"/>
</dbReference>
<dbReference type="GO" id="GO:0045202">
    <property type="term" value="C:synapse"/>
    <property type="evidence" value="ECO:0000250"/>
    <property type="project" value="UniProtKB"/>
</dbReference>
<dbReference type="GO" id="GO:0140892">
    <property type="term" value="F:sodium,bicarbonate:chloride antiporter activity"/>
    <property type="evidence" value="ECO:0007669"/>
    <property type="project" value="Ensembl"/>
</dbReference>
<dbReference type="GO" id="GO:0008510">
    <property type="term" value="F:sodium:bicarbonate symporter activity"/>
    <property type="evidence" value="ECO:0000314"/>
    <property type="project" value="UniProtKB"/>
</dbReference>
<dbReference type="GO" id="GO:0005452">
    <property type="term" value="F:solute:inorganic anion antiporter activity"/>
    <property type="evidence" value="ECO:0000304"/>
    <property type="project" value="Reactome"/>
</dbReference>
<dbReference type="GO" id="GO:0015701">
    <property type="term" value="P:bicarbonate transport"/>
    <property type="evidence" value="ECO:0000318"/>
    <property type="project" value="GO_Central"/>
</dbReference>
<dbReference type="GO" id="GO:0048854">
    <property type="term" value="P:brain morphogenesis"/>
    <property type="evidence" value="ECO:0007669"/>
    <property type="project" value="Ensembl"/>
</dbReference>
<dbReference type="GO" id="GO:0006821">
    <property type="term" value="P:chloride transport"/>
    <property type="evidence" value="ECO:0000303"/>
    <property type="project" value="UniProtKB"/>
</dbReference>
<dbReference type="GO" id="GO:0035641">
    <property type="term" value="P:locomotory exploration behavior"/>
    <property type="evidence" value="ECO:0007669"/>
    <property type="project" value="Ensembl"/>
</dbReference>
<dbReference type="GO" id="GO:0035264">
    <property type="term" value="P:multicellular organism growth"/>
    <property type="evidence" value="ECO:0007669"/>
    <property type="project" value="Ensembl"/>
</dbReference>
<dbReference type="GO" id="GO:0009791">
    <property type="term" value="P:post-embryonic development"/>
    <property type="evidence" value="ECO:0007669"/>
    <property type="project" value="Ensembl"/>
</dbReference>
<dbReference type="GO" id="GO:1902600">
    <property type="term" value="P:proton transmembrane transport"/>
    <property type="evidence" value="ECO:0007669"/>
    <property type="project" value="Ensembl"/>
</dbReference>
<dbReference type="GO" id="GO:0021860">
    <property type="term" value="P:pyramidal neuron development"/>
    <property type="evidence" value="ECO:0007669"/>
    <property type="project" value="Ensembl"/>
</dbReference>
<dbReference type="GO" id="GO:0051453">
    <property type="term" value="P:regulation of intracellular pH"/>
    <property type="evidence" value="ECO:0000318"/>
    <property type="project" value="GO_Central"/>
</dbReference>
<dbReference type="GO" id="GO:0048172">
    <property type="term" value="P:regulation of short-term neuronal synaptic plasticity"/>
    <property type="evidence" value="ECO:0000250"/>
    <property type="project" value="UniProtKB"/>
</dbReference>
<dbReference type="GO" id="GO:0009416">
    <property type="term" value="P:response to light stimulus"/>
    <property type="evidence" value="ECO:0007669"/>
    <property type="project" value="Ensembl"/>
</dbReference>
<dbReference type="GO" id="GO:0055085">
    <property type="term" value="P:transmembrane transport"/>
    <property type="evidence" value="ECO:0000318"/>
    <property type="project" value="GO_Central"/>
</dbReference>
<dbReference type="GO" id="GO:0007601">
    <property type="term" value="P:visual perception"/>
    <property type="evidence" value="ECO:0000250"/>
    <property type="project" value="UniProtKB"/>
</dbReference>
<dbReference type="FunFam" id="1.10.287.570:FF:000001">
    <property type="entry name" value="Anion exchange protein"/>
    <property type="match status" value="1"/>
</dbReference>
<dbReference type="Gene3D" id="1.10.287.570">
    <property type="entry name" value="Helical hairpin bin"/>
    <property type="match status" value="1"/>
</dbReference>
<dbReference type="Gene3D" id="3.40.930.10">
    <property type="entry name" value="Mannitol-specific EII, Chain A"/>
    <property type="match status" value="1"/>
</dbReference>
<dbReference type="InterPro" id="IPR013769">
    <property type="entry name" value="Band3_cytoplasmic_dom"/>
</dbReference>
<dbReference type="InterPro" id="IPR011531">
    <property type="entry name" value="HCO3_transpt-like_TM_dom"/>
</dbReference>
<dbReference type="InterPro" id="IPR003020">
    <property type="entry name" value="HCO3_transpt_euk"/>
</dbReference>
<dbReference type="InterPro" id="IPR003024">
    <property type="entry name" value="Na/HCO3_transpt"/>
</dbReference>
<dbReference type="InterPro" id="IPR016152">
    <property type="entry name" value="PTrfase/Anion_transptr"/>
</dbReference>
<dbReference type="NCBIfam" id="TIGR00834">
    <property type="entry name" value="ae"/>
    <property type="match status" value="1"/>
</dbReference>
<dbReference type="PANTHER" id="PTHR11453">
    <property type="entry name" value="ANION EXCHANGE PROTEIN"/>
    <property type="match status" value="1"/>
</dbReference>
<dbReference type="PANTHER" id="PTHR11453:SF32">
    <property type="entry name" value="SODIUM-DRIVEN CHLORIDE BICARBONATE EXCHANGER"/>
    <property type="match status" value="1"/>
</dbReference>
<dbReference type="Pfam" id="PF07565">
    <property type="entry name" value="Band_3_cyto"/>
    <property type="match status" value="1"/>
</dbReference>
<dbReference type="Pfam" id="PF00955">
    <property type="entry name" value="HCO3_cotransp"/>
    <property type="match status" value="1"/>
</dbReference>
<dbReference type="PRINTS" id="PR01231">
    <property type="entry name" value="HCO3TRNSPORT"/>
</dbReference>
<dbReference type="PRINTS" id="PR01232">
    <property type="entry name" value="NAHCO3TRSPRT"/>
</dbReference>
<dbReference type="SUPFAM" id="SSF55804">
    <property type="entry name" value="Phoshotransferase/anion transport protein"/>
    <property type="match status" value="1"/>
</dbReference>
<proteinExistence type="evidence at protein level"/>
<keyword id="KW-0025">Alternative splicing</keyword>
<keyword id="KW-0050">Antiport</keyword>
<keyword id="KW-1268">Autism spectrum disorder</keyword>
<keyword id="KW-1003">Cell membrane</keyword>
<keyword id="KW-0966">Cell projection</keyword>
<keyword id="KW-0225">Disease variant</keyword>
<keyword id="KW-0325">Glycoprotein</keyword>
<keyword id="KW-0991">Intellectual disability</keyword>
<keyword id="KW-0406">Ion transport</keyword>
<keyword id="KW-0472">Membrane</keyword>
<keyword id="KW-0597">Phosphoprotein</keyword>
<keyword id="KW-1267">Proteomics identification</keyword>
<keyword id="KW-1185">Reference proteome</keyword>
<keyword id="KW-0915">Sodium</keyword>
<keyword id="KW-0739">Sodium transport</keyword>
<keyword id="KW-0769">Symport</keyword>
<keyword id="KW-0770">Synapse</keyword>
<keyword id="KW-0812">Transmembrane</keyword>
<keyword id="KW-1133">Transmembrane helix</keyword>
<keyword id="KW-0813">Transport</keyword>
<evidence type="ECO:0000250" key="1">
    <source>
        <dbReference type="UniProtKB" id="Q5DTL9"/>
    </source>
</evidence>
<evidence type="ECO:0000250" key="2">
    <source>
        <dbReference type="UniProtKB" id="Q80ZA5"/>
    </source>
</evidence>
<evidence type="ECO:0000255" key="3"/>
<evidence type="ECO:0000256" key="4">
    <source>
        <dbReference type="SAM" id="MobiDB-lite"/>
    </source>
</evidence>
<evidence type="ECO:0000269" key="5">
    <source>
    </source>
</evidence>
<evidence type="ECO:0000269" key="6">
    <source>
    </source>
</evidence>
<evidence type="ECO:0000269" key="7">
    <source>
    </source>
</evidence>
<evidence type="ECO:0000269" key="8">
    <source>
    </source>
</evidence>
<evidence type="ECO:0000303" key="9">
    <source>
    </source>
</evidence>
<evidence type="ECO:0000303" key="10">
    <source>
    </source>
</evidence>
<evidence type="ECO:0000303" key="11">
    <source>
    </source>
</evidence>
<evidence type="ECO:0000303" key="12">
    <source>
    </source>
</evidence>
<evidence type="ECO:0000305" key="13"/>
<evidence type="ECO:0000312" key="14">
    <source>
        <dbReference type="HGNC" id="HGNC:13811"/>
    </source>
</evidence>
<organism>
    <name type="scientific">Homo sapiens</name>
    <name type="common">Human</name>
    <dbReference type="NCBI Taxonomy" id="9606"/>
    <lineage>
        <taxon>Eukaryota</taxon>
        <taxon>Metazoa</taxon>
        <taxon>Chordata</taxon>
        <taxon>Craniata</taxon>
        <taxon>Vertebrata</taxon>
        <taxon>Euteleostomi</taxon>
        <taxon>Mammalia</taxon>
        <taxon>Eutheria</taxon>
        <taxon>Euarchontoglires</taxon>
        <taxon>Primates</taxon>
        <taxon>Haplorrhini</taxon>
        <taxon>Catarrhini</taxon>
        <taxon>Hominidae</taxon>
        <taxon>Homo</taxon>
    </lineage>
</organism>
<comment type="function">
    <text evidence="1 2 6">Sodium/bicarbonate cotransporter which plays an important role in regulating intracellular pH (PubMed:18319254). Has been shown to act as a sodium/bicarbonate cotransporter in exchange for intracellular chloride (By similarity). Has also been shown to act as a sodium/biocarbonate cotransporter which does not couple net influx of bicarbonate to net efflux of chloride, with the observed chloride efflux being due to chloride self-exchange (PubMed:18319254). Controls neuronal pH and may contribute to the secretion of cerebrospinal fluid (By similarity). Acting on presynaptic intracellular pH, it promotes GABA release, reduces the excitability of CA1 pyramidal neurons, and modulates short-term synaptic plasticity (By similarity). Required in retinal cells to maintain normal pH which is necessary for normal vision (By similarity). In the kidney, likely to mediate bicarbonate reclamation in the apical membrane of the proximal tubules (By similarity).</text>
</comment>
<comment type="catalytic activity">
    <reaction evidence="1">
        <text>2 hydrogencarbonate(out) + chloride(in) + Na(+)(out) = 2 hydrogencarbonate(in) + chloride(out) + Na(+)(in)</text>
        <dbReference type="Rhea" id="RHEA:72739"/>
        <dbReference type="ChEBI" id="CHEBI:17544"/>
        <dbReference type="ChEBI" id="CHEBI:17996"/>
        <dbReference type="ChEBI" id="CHEBI:29101"/>
    </reaction>
</comment>
<comment type="subcellular location">
    <subcellularLocation>
        <location evidence="1">Basolateral cell membrane</location>
        <topology evidence="3">Multi-pass membrane protein</topology>
    </subcellularLocation>
    <subcellularLocation>
        <location evidence="2">Apical cell membrane</location>
        <topology evidence="3">Multi-pass membrane protein</topology>
    </subcellularLocation>
    <subcellularLocation>
        <location evidence="1">Cell projection</location>
        <location evidence="1">Dendrite</location>
    </subcellularLocation>
    <subcellularLocation>
        <location evidence="1">Cell projection</location>
        <location evidence="1">Axon</location>
    </subcellularLocation>
    <subcellularLocation>
        <location evidence="1">Perikaryon</location>
    </subcellularLocation>
    <subcellularLocation>
        <location evidence="1">Presynapse</location>
    </subcellularLocation>
    <subcellularLocation>
        <location evidence="1">Postsynapse</location>
    </subcellularLocation>
    <text evidence="1">Detected in dendrites and axon terminals of retinal OFF bipolar cells and in axon terminals of ON bipolar cells (By similarity). In amacrine cells, located in the perikaryon (By similarity). Also detected in basal and apical dendrites of hippocampal pyramidal cells (By similarity). Localized to GABAergic inhibitory presynapses (By similarity).</text>
</comment>
<comment type="alternative products">
    <event type="alternative splicing"/>
    <isoform>
        <id>Q6U841-1</id>
        <name>1</name>
        <name evidence="12">NCBE-B</name>
        <sequence type="displayed"/>
    </isoform>
    <isoform>
        <id>Q6U841-2</id>
        <name>2</name>
        <name evidence="12">NCBE-A</name>
        <sequence type="described" ref="VSP_019653"/>
    </isoform>
    <isoform>
        <id>Q6U841-3</id>
        <name>3</name>
        <sequence type="described" ref="VSP_044993 VSP_019653"/>
    </isoform>
    <isoform>
        <id>Q6U841-4</id>
        <name>4</name>
        <sequence type="described" ref="VSP_054471 VSP_054472"/>
    </isoform>
</comment>
<comment type="tissue specificity">
    <text evidence="6">Predominantly expressed in the brain.</text>
</comment>
<comment type="domain">
    <text evidence="2">The N-terminal cytoplasmic domain is likely to have a high level of intrinsic disorder.</text>
</comment>
<comment type="disease" evidence="7 8">
    <disease id="DI-06860">
        <name>Neurodevelopmental disorder with hypotonia and characteristic brain abnormalities</name>
        <acronym>NEDHBA</acronym>
        <description>An autosomal recessive disorder characterized by hypotonia in infancy, delayed psychomotor development and intellectual impairment. Affected individuals commonly display traits associated with autistic spectrum disorder including anxiety, hyperactivity and stereotyped movements. Episodes of seizures in the first few years of life may occur. Brain imaging shows abnormalities of the lateral ventricles.</description>
        <dbReference type="MIM" id="620746"/>
    </disease>
    <text>The disease is caused by variants affecting the gene represented in this entry.</text>
</comment>
<comment type="similarity">
    <text evidence="13">Belongs to the anion exchanger (TC 2.A.31) family.</text>
</comment>
<comment type="caution">
    <text evidence="1 6">Has been shown to act as a sodium/bicarbonate cotransporter in exchange for intracellular chloride (By similarity). Has also been shown to act as a sodium/biocarbonate cotransporter which is not responsible for net efflux of chloride, with the observed chloride efflux being due to chloride self-exchange (PubMed:18319254).</text>
</comment>
<reference key="1">
    <citation type="journal article" date="2000" name="J. Biol. Chem.">
        <title>The Na+-driven Cl-/HCO3- exchanger. Cloning, tissue distribution, and functional characterization.</title>
        <authorList>
            <person name="Wang C.-Z."/>
            <person name="Yano H."/>
            <person name="Nagashima K."/>
            <person name="Seino S."/>
        </authorList>
    </citation>
    <scope>NUCLEOTIDE SEQUENCE [MRNA] (ISOFORM 2)</scope>
</reference>
<reference key="2">
    <citation type="journal article" date="2008" name="J. Biol. Chem.">
        <title>Characterization of human SLC4A10 as an electroneutral Na/HCO3 cotransporter (NBCn2) with Cl- self-exchange activity.</title>
        <authorList>
            <person name="Parker M.D."/>
            <person name="Musa-Aziz R."/>
            <person name="Rojas J.D."/>
            <person name="Choi I."/>
            <person name="Daly C.M."/>
            <person name="Boron W.F."/>
        </authorList>
    </citation>
    <scope>NUCLEOTIDE SEQUENCE [MRNA] (ISOFORM 1)</scope>
    <scope>FUNCTION</scope>
    <scope>ALTERNATIVE SPLICING</scope>
    <scope>TISSUE SPECIFICITY</scope>
    <source>
        <tissue>Kidney</tissue>
    </source>
</reference>
<reference key="3">
    <citation type="journal article" date="2004" name="Nat. Genet.">
        <title>Complete sequencing and characterization of 21,243 full-length human cDNAs.</title>
        <authorList>
            <person name="Ota T."/>
            <person name="Suzuki Y."/>
            <person name="Nishikawa T."/>
            <person name="Otsuki T."/>
            <person name="Sugiyama T."/>
            <person name="Irie R."/>
            <person name="Wakamatsu A."/>
            <person name="Hayashi K."/>
            <person name="Sato H."/>
            <person name="Nagai K."/>
            <person name="Kimura K."/>
            <person name="Makita H."/>
            <person name="Sekine M."/>
            <person name="Obayashi M."/>
            <person name="Nishi T."/>
            <person name="Shibahara T."/>
            <person name="Tanaka T."/>
            <person name="Ishii S."/>
            <person name="Yamamoto J."/>
            <person name="Saito K."/>
            <person name="Kawai Y."/>
            <person name="Isono Y."/>
            <person name="Nakamura Y."/>
            <person name="Nagahari K."/>
            <person name="Murakami K."/>
            <person name="Yasuda T."/>
            <person name="Iwayanagi T."/>
            <person name="Wagatsuma M."/>
            <person name="Shiratori A."/>
            <person name="Sudo H."/>
            <person name="Hosoiri T."/>
            <person name="Kaku Y."/>
            <person name="Kodaira H."/>
            <person name="Kondo H."/>
            <person name="Sugawara M."/>
            <person name="Takahashi M."/>
            <person name="Kanda K."/>
            <person name="Yokoi T."/>
            <person name="Furuya T."/>
            <person name="Kikkawa E."/>
            <person name="Omura Y."/>
            <person name="Abe K."/>
            <person name="Kamihara K."/>
            <person name="Katsuta N."/>
            <person name="Sato K."/>
            <person name="Tanikawa M."/>
            <person name="Yamazaki M."/>
            <person name="Ninomiya K."/>
            <person name="Ishibashi T."/>
            <person name="Yamashita H."/>
            <person name="Murakawa K."/>
            <person name="Fujimori K."/>
            <person name="Tanai H."/>
            <person name="Kimata M."/>
            <person name="Watanabe M."/>
            <person name="Hiraoka S."/>
            <person name="Chiba Y."/>
            <person name="Ishida S."/>
            <person name="Ono Y."/>
            <person name="Takiguchi S."/>
            <person name="Watanabe S."/>
            <person name="Yosida M."/>
            <person name="Hotuta T."/>
            <person name="Kusano J."/>
            <person name="Kanehori K."/>
            <person name="Takahashi-Fujii A."/>
            <person name="Hara H."/>
            <person name="Tanase T.-O."/>
            <person name="Nomura Y."/>
            <person name="Togiya S."/>
            <person name="Komai F."/>
            <person name="Hara R."/>
            <person name="Takeuchi K."/>
            <person name="Arita M."/>
            <person name="Imose N."/>
            <person name="Musashino K."/>
            <person name="Yuuki H."/>
            <person name="Oshima A."/>
            <person name="Sasaki N."/>
            <person name="Aotsuka S."/>
            <person name="Yoshikawa Y."/>
            <person name="Matsunawa H."/>
            <person name="Ichihara T."/>
            <person name="Shiohata N."/>
            <person name="Sano S."/>
            <person name="Moriya S."/>
            <person name="Momiyama H."/>
            <person name="Satoh N."/>
            <person name="Takami S."/>
            <person name="Terashima Y."/>
            <person name="Suzuki O."/>
            <person name="Nakagawa S."/>
            <person name="Senoh A."/>
            <person name="Mizoguchi H."/>
            <person name="Goto Y."/>
            <person name="Shimizu F."/>
            <person name="Wakebe H."/>
            <person name="Hishigaki H."/>
            <person name="Watanabe T."/>
            <person name="Sugiyama A."/>
            <person name="Takemoto M."/>
            <person name="Kawakami B."/>
            <person name="Yamazaki M."/>
            <person name="Watanabe K."/>
            <person name="Kumagai A."/>
            <person name="Itakura S."/>
            <person name="Fukuzumi Y."/>
            <person name="Fujimori Y."/>
            <person name="Komiyama M."/>
            <person name="Tashiro H."/>
            <person name="Tanigami A."/>
            <person name="Fujiwara T."/>
            <person name="Ono T."/>
            <person name="Yamada K."/>
            <person name="Fujii Y."/>
            <person name="Ozaki K."/>
            <person name="Hirao M."/>
            <person name="Ohmori Y."/>
            <person name="Kawabata A."/>
            <person name="Hikiji T."/>
            <person name="Kobatake N."/>
            <person name="Inagaki H."/>
            <person name="Ikema Y."/>
            <person name="Okamoto S."/>
            <person name="Okitani R."/>
            <person name="Kawakami T."/>
            <person name="Noguchi S."/>
            <person name="Itoh T."/>
            <person name="Shigeta K."/>
            <person name="Senba T."/>
            <person name="Matsumura K."/>
            <person name="Nakajima Y."/>
            <person name="Mizuno T."/>
            <person name="Morinaga M."/>
            <person name="Sasaki M."/>
            <person name="Togashi T."/>
            <person name="Oyama M."/>
            <person name="Hata H."/>
            <person name="Watanabe M."/>
            <person name="Komatsu T."/>
            <person name="Mizushima-Sugano J."/>
            <person name="Satoh T."/>
            <person name="Shirai Y."/>
            <person name="Takahashi Y."/>
            <person name="Nakagawa K."/>
            <person name="Okumura K."/>
            <person name="Nagase T."/>
            <person name="Nomura N."/>
            <person name="Kikuchi H."/>
            <person name="Masuho Y."/>
            <person name="Yamashita R."/>
            <person name="Nakai K."/>
            <person name="Yada T."/>
            <person name="Nakamura Y."/>
            <person name="Ohara O."/>
            <person name="Isogai T."/>
            <person name="Sugano S."/>
        </authorList>
    </citation>
    <scope>NUCLEOTIDE SEQUENCE [LARGE SCALE MRNA] (ISOFORMS 3 AND 4)</scope>
    <source>
        <tissue>Brain</tissue>
        <tissue>Cerebellum</tissue>
    </source>
</reference>
<reference key="4">
    <citation type="journal article" date="2005" name="Nature">
        <title>Generation and annotation of the DNA sequences of human chromosomes 2 and 4.</title>
        <authorList>
            <person name="Hillier L.W."/>
            <person name="Graves T.A."/>
            <person name="Fulton R.S."/>
            <person name="Fulton L.A."/>
            <person name="Pepin K.H."/>
            <person name="Minx P."/>
            <person name="Wagner-McPherson C."/>
            <person name="Layman D."/>
            <person name="Wylie K."/>
            <person name="Sekhon M."/>
            <person name="Becker M.C."/>
            <person name="Fewell G.A."/>
            <person name="Delehaunty K.D."/>
            <person name="Miner T.L."/>
            <person name="Nash W.E."/>
            <person name="Kremitzki C."/>
            <person name="Oddy L."/>
            <person name="Du H."/>
            <person name="Sun H."/>
            <person name="Bradshaw-Cordum H."/>
            <person name="Ali J."/>
            <person name="Carter J."/>
            <person name="Cordes M."/>
            <person name="Harris A."/>
            <person name="Isak A."/>
            <person name="van Brunt A."/>
            <person name="Nguyen C."/>
            <person name="Du F."/>
            <person name="Courtney L."/>
            <person name="Kalicki J."/>
            <person name="Ozersky P."/>
            <person name="Abbott S."/>
            <person name="Armstrong J."/>
            <person name="Belter E.A."/>
            <person name="Caruso L."/>
            <person name="Cedroni M."/>
            <person name="Cotton M."/>
            <person name="Davidson T."/>
            <person name="Desai A."/>
            <person name="Elliott G."/>
            <person name="Erb T."/>
            <person name="Fronick C."/>
            <person name="Gaige T."/>
            <person name="Haakenson W."/>
            <person name="Haglund K."/>
            <person name="Holmes A."/>
            <person name="Harkins R."/>
            <person name="Kim K."/>
            <person name="Kruchowski S.S."/>
            <person name="Strong C.M."/>
            <person name="Grewal N."/>
            <person name="Goyea E."/>
            <person name="Hou S."/>
            <person name="Levy A."/>
            <person name="Martinka S."/>
            <person name="Mead K."/>
            <person name="McLellan M.D."/>
            <person name="Meyer R."/>
            <person name="Randall-Maher J."/>
            <person name="Tomlinson C."/>
            <person name="Dauphin-Kohlberg S."/>
            <person name="Kozlowicz-Reilly A."/>
            <person name="Shah N."/>
            <person name="Swearengen-Shahid S."/>
            <person name="Snider J."/>
            <person name="Strong J.T."/>
            <person name="Thompson J."/>
            <person name="Yoakum M."/>
            <person name="Leonard S."/>
            <person name="Pearman C."/>
            <person name="Trani L."/>
            <person name="Radionenko M."/>
            <person name="Waligorski J.E."/>
            <person name="Wang C."/>
            <person name="Rock S.M."/>
            <person name="Tin-Wollam A.-M."/>
            <person name="Maupin R."/>
            <person name="Latreille P."/>
            <person name="Wendl M.C."/>
            <person name="Yang S.-P."/>
            <person name="Pohl C."/>
            <person name="Wallis J.W."/>
            <person name="Spieth J."/>
            <person name="Bieri T.A."/>
            <person name="Berkowicz N."/>
            <person name="Nelson J.O."/>
            <person name="Osborne J."/>
            <person name="Ding L."/>
            <person name="Meyer R."/>
            <person name="Sabo A."/>
            <person name="Shotland Y."/>
            <person name="Sinha P."/>
            <person name="Wohldmann P.E."/>
            <person name="Cook L.L."/>
            <person name="Hickenbotham M.T."/>
            <person name="Eldred J."/>
            <person name="Williams D."/>
            <person name="Jones T.A."/>
            <person name="She X."/>
            <person name="Ciccarelli F.D."/>
            <person name="Izaurralde E."/>
            <person name="Taylor J."/>
            <person name="Schmutz J."/>
            <person name="Myers R.M."/>
            <person name="Cox D.R."/>
            <person name="Huang X."/>
            <person name="McPherson J.D."/>
            <person name="Mardis E.R."/>
            <person name="Clifton S.W."/>
            <person name="Warren W.C."/>
            <person name="Chinwalla A.T."/>
            <person name="Eddy S.R."/>
            <person name="Marra M.A."/>
            <person name="Ovcharenko I."/>
            <person name="Furey T.S."/>
            <person name="Miller W."/>
            <person name="Eichler E.E."/>
            <person name="Bork P."/>
            <person name="Suyama M."/>
            <person name="Torrents D."/>
            <person name="Waterston R.H."/>
            <person name="Wilson R.K."/>
        </authorList>
    </citation>
    <scope>NUCLEOTIDE SEQUENCE [LARGE SCALE GENOMIC DNA]</scope>
</reference>
<reference key="5">
    <citation type="submission" date="2005-09" db="EMBL/GenBank/DDBJ databases">
        <authorList>
            <person name="Mural R.J."/>
            <person name="Istrail S."/>
            <person name="Sutton G.G."/>
            <person name="Florea L."/>
            <person name="Halpern A.L."/>
            <person name="Mobarry C.M."/>
            <person name="Lippert R."/>
            <person name="Walenz B."/>
            <person name="Shatkay H."/>
            <person name="Dew I."/>
            <person name="Miller J.R."/>
            <person name="Flanigan M.J."/>
            <person name="Edwards N.J."/>
            <person name="Bolanos R."/>
            <person name="Fasulo D."/>
            <person name="Halldorsson B.V."/>
            <person name="Hannenhalli S."/>
            <person name="Turner R."/>
            <person name="Yooseph S."/>
            <person name="Lu F."/>
            <person name="Nusskern D.R."/>
            <person name="Shue B.C."/>
            <person name="Zheng X.H."/>
            <person name="Zhong F."/>
            <person name="Delcher A.L."/>
            <person name="Huson D.H."/>
            <person name="Kravitz S.A."/>
            <person name="Mouchard L."/>
            <person name="Reinert K."/>
            <person name="Remington K.A."/>
            <person name="Clark A.G."/>
            <person name="Waterman M.S."/>
            <person name="Eichler E.E."/>
            <person name="Adams M.D."/>
            <person name="Hunkapiller M.W."/>
            <person name="Myers E.W."/>
            <person name="Venter J.C."/>
        </authorList>
    </citation>
    <scope>NUCLEOTIDE SEQUENCE [LARGE SCALE GENOMIC DNA]</scope>
</reference>
<reference key="6">
    <citation type="journal article" date="2004" name="Genome Res.">
        <title>The status, quality, and expansion of the NIH full-length cDNA project: the Mammalian Gene Collection (MGC).</title>
        <authorList>
            <consortium name="The MGC Project Team"/>
        </authorList>
    </citation>
    <scope>NUCLEOTIDE SEQUENCE [LARGE SCALE MRNA] (ISOFORMS 1 AND 2)</scope>
    <source>
        <tissue>Cerebellum</tissue>
        <tissue>Testis</tissue>
    </source>
</reference>
<reference key="7">
    <citation type="journal article" date="2007" name="BMC Genomics">
        <title>The full-ORF clone resource of the German cDNA consortium.</title>
        <authorList>
            <person name="Bechtel S."/>
            <person name="Rosenfelder H."/>
            <person name="Duda A."/>
            <person name="Schmidt C.P."/>
            <person name="Ernst U."/>
            <person name="Wellenreuther R."/>
            <person name="Mehrle A."/>
            <person name="Schuster C."/>
            <person name="Bahr A."/>
            <person name="Bloecker H."/>
            <person name="Heubner D."/>
            <person name="Hoerlein A."/>
            <person name="Michel G."/>
            <person name="Wedler H."/>
            <person name="Koehrer K."/>
            <person name="Ottenwaelder B."/>
            <person name="Poustka A."/>
            <person name="Wiemann S."/>
            <person name="Schupp I."/>
        </authorList>
    </citation>
    <scope>NUCLEOTIDE SEQUENCE [LARGE SCALE MRNA] OF 897-1118 (ISOFORM 1)</scope>
    <source>
        <tissue>Amygdala</tissue>
    </source>
</reference>
<reference key="8">
    <citation type="journal article" date="2008" name="Neuroscience">
        <title>Use of a new polyclonal antibody to study the distribution and glycosylation of the sodium-coupled bicarbonate transporter NCBE in rodent brain.</title>
        <authorList>
            <person name="Chen L.M."/>
            <person name="Kelly M.L."/>
            <person name="Rojas J.D."/>
            <person name="Parker M.D."/>
            <person name="Gill H.S."/>
            <person name="Davis B.A."/>
            <person name="Boron W.F."/>
        </authorList>
    </citation>
    <scope>GLYCOSYLATION AT ASN-677; ASN-687 AND ASN-697</scope>
    <scope>MUTAGENESIS OF ASN-677; ASN-687 AND ASN-697</scope>
</reference>
<reference key="9">
    <citation type="journal article" date="2023" name="Brain">
        <title>SLC4A10 mutation causes a neurological disorder associated with impaired GABAergic transmission.</title>
        <authorList>
            <person name="Fasham J."/>
            <person name="Huebner A.K."/>
            <person name="Liebmann L."/>
            <person name="Khalaf-Nazzal R."/>
            <person name="Maroofian R."/>
            <person name="Kryeziu N."/>
            <person name="Wortmann S.B."/>
            <person name="Leslie J.S."/>
            <person name="Ubeyratna N."/>
            <person name="Mancini G.M.S."/>
            <person name="van Slegtenhorst M."/>
            <person name="Wilke M."/>
            <person name="Haack T.B."/>
            <person name="Shamseldin H.E."/>
            <person name="Gleeson J.G."/>
            <person name="Almuhaizea M."/>
            <person name="Dweikat I."/>
            <person name="Abu-Libdeh B."/>
            <person name="Daana M."/>
            <person name="Zaki M.S."/>
            <person name="Wakeling M.N."/>
            <person name="McGavin L."/>
            <person name="Turnpenny P.D."/>
            <person name="Alkuraya F.S."/>
            <person name="Houlden H."/>
            <person name="Schlattmann P."/>
            <person name="Kaila K."/>
            <person name="Crosby A.H."/>
            <person name="Baple E.L."/>
            <person name="Huebner C.A."/>
        </authorList>
    </citation>
    <scope>VARIANTS NEDHBA MET-577; 757-ARG--SER-1118 DEL; 873-TRP--SER-1118 DEL AND ILE-1103</scope>
    <scope>CHARACTERIZATION OF VARIANTS NEDHBA MET-577 AND ILE-1103</scope>
    <scope>INVOLVEMENT IN NEDHBA</scope>
</reference>
<reference key="10">
    <citation type="journal article" date="2024" name="Genet. Med.">
        <title>Biallelic variants in SLC4A10 encoding a sodium-dependent bicarbonate transporter lead to a neurodevelopmental disorder.</title>
        <authorList>
            <person name="Maroofian R."/>
            <person name="Zamani M."/>
            <person name="Kaiyrzhanov R."/>
            <person name="Liebmann L."/>
            <person name="Karimiani E.G."/>
            <person name="Vona B."/>
            <person name="Huebner A.K."/>
            <person name="Calame D.G."/>
            <person name="Misra V.K."/>
            <person name="Sadeghian S."/>
            <person name="Azizimalamiri R."/>
            <person name="Mohammadi M.H."/>
            <person name="Zeighami J."/>
            <person name="Heydaran S."/>
            <person name="Toosi M.B."/>
            <person name="Akhondian J."/>
            <person name="Babaei M."/>
            <person name="Hashemi N."/>
            <person name="Schnur R.E."/>
            <person name="Suri M."/>
            <person name="Setzke J."/>
            <person name="Wagner M."/>
            <person name="Brunet T."/>
            <person name="Grochowski C.M."/>
            <person name="Emrick L."/>
            <person name="Chung W.K."/>
            <person name="Hellmich U.A."/>
            <person name="Schmidts M."/>
            <person name="Lupski J.R."/>
            <person name="Galehdari H."/>
            <person name="Severino M."/>
            <person name="Houlden H."/>
            <person name="Huebner C.A."/>
        </authorList>
    </citation>
    <scope>VARIANTS NEDHBA TYR-223; THR-351; CYS-538; TRP-622; PHE-706; CYS-721 AND LEU-965</scope>
    <scope>CHARACTERIZATION OF VARIANTS NEDHBA TYR-223; TRP-622; CYS-721; 873-TRP--SER-1118 DEL AND LEU-965</scope>
    <scope>INVOLVEMENT IN NEDHBA</scope>
</reference>
<sequence>MEIKDQGAQMEPLLPTRNDEEAVVDRGGTRSILKTHFEKEDLEGHRTLFIGVHVPLGGRKSHRRHRHRGHKHRKRDRERDSGLEDGRESPSFDTPSQRVQFILGTEDDDEEHIPHDLFTELDEICWREGEDAEWRETARWLKFEEDVEDGGERWSKPYVATLSLHSLFELRSCILNGTVLLDMHANTLEEIADMVLDQQVSSGQLNEDVRHRVHEALMKQHHHQNQKKLTNRIPIVRSFADIGKKQSEPNSMDKNAGQVVSPQSAPACVENKNDVSRENSTVDFSKGLGGQQKGHTSPCGMKQRHEKGPPHQQEREVDLHFMKKIPPGAEASNILVGELEFLDRTVVAFVRLSPAVLLQGLAEVPIPTRFLFILLGPLGKGQQYHEIGRSIATLMTDEVFHDVAYKAKDRNDLVSGIDEFLDQVTVLPPGEWDPSIRIEPPKNVPSQEKRKIPAVPNGTAAHGEAEPHGGHSGPELQRTGRIFGGLILDIKRKAPYFWSDFRDAFSLQCLASFLFLYCACMSPVITFGGLLGEATEGRISAIESLFGASMTGIAYSLFGGQPLTILGSTGPVLVFEKILFKFCKEYGLSYLSLRASIGLWTATLCIILVATDASSLVCYITRFTEEAFASLICIIFIYEALEKLFELSEAYPINMHNDLELLTQYSCNCVEPHNPSNGTLKEWRESNISASDIIWENLTVSECKSLHGEYVGRACGHDHPYVPDVLFWSVILFFSTVTLSATLKQFKTSRYFPTKVRSIVSDFAVFLTILCMVLIDYAIGIPSPKLQVPSVFKPTRDDRGWFVTPLGPNPWWTVIAAIIPALLCTILIFMDQQITAVIINRKEHKLKKGCGYHLDLLMVAVMLGVCSIMGLPWFVAATVLSITHVNSLKLESECSAPGEQPKFLGIREQRVTGLMIFILMGSSVFMTSILKFIPMPVLYGVFLYMGASSLKGIQFFDRIKLFWMPAKHQPDFIYLRHVPLRKVHLFTIIQMSCLGLLWIIKVSRAAIVFPMMVLALVFVRKLMDLLFTKRELSWLDDLMPESKKKKLEDAEKEEEQSMLAMEDEGTVQLPLEGHYRDDPSVINISDEMSKTALWRNLLITADNSKDKESSFPSKSSPS</sequence>
<protein>
    <recommendedName>
        <fullName evidence="9">Sodium-driven chloride bicarbonate exchanger</fullName>
    </recommendedName>
    <alternativeName>
        <fullName evidence="14">Solute carrier family 4 member 10</fullName>
    </alternativeName>
</protein>